<feature type="chain" id="PRO_0000252807" description="ATP-dependent Clp protease proteolytic subunit">
    <location>
        <begin position="1"/>
        <end position="217"/>
    </location>
</feature>
<feature type="active site" description="Nucleophile" evidence="1">
    <location>
        <position position="121"/>
    </location>
</feature>
<feature type="active site" evidence="1">
    <location>
        <position position="146"/>
    </location>
</feature>
<keyword id="KW-0963">Cytoplasm</keyword>
<keyword id="KW-0378">Hydrolase</keyword>
<keyword id="KW-0645">Protease</keyword>
<keyword id="KW-0720">Serine protease</keyword>
<gene>
    <name evidence="1" type="primary">clpP</name>
    <name type="ordered locus">Bcen_6156</name>
</gene>
<dbReference type="EC" id="3.4.21.92" evidence="1"/>
<dbReference type="EMBL" id="CP000380">
    <property type="protein sequence ID" value="ABF81020.1"/>
    <property type="molecule type" value="Genomic_DNA"/>
</dbReference>
<dbReference type="SMR" id="Q1BH85"/>
<dbReference type="MEROPS" id="S14.001"/>
<dbReference type="HOGENOM" id="CLU_058707_3_2_4"/>
<dbReference type="GO" id="GO:0005737">
    <property type="term" value="C:cytoplasm"/>
    <property type="evidence" value="ECO:0007669"/>
    <property type="project" value="UniProtKB-SubCell"/>
</dbReference>
<dbReference type="GO" id="GO:0009368">
    <property type="term" value="C:endopeptidase Clp complex"/>
    <property type="evidence" value="ECO:0007669"/>
    <property type="project" value="TreeGrafter"/>
</dbReference>
<dbReference type="GO" id="GO:0004176">
    <property type="term" value="F:ATP-dependent peptidase activity"/>
    <property type="evidence" value="ECO:0007669"/>
    <property type="project" value="InterPro"/>
</dbReference>
<dbReference type="GO" id="GO:0051117">
    <property type="term" value="F:ATPase binding"/>
    <property type="evidence" value="ECO:0007669"/>
    <property type="project" value="TreeGrafter"/>
</dbReference>
<dbReference type="GO" id="GO:0004252">
    <property type="term" value="F:serine-type endopeptidase activity"/>
    <property type="evidence" value="ECO:0007669"/>
    <property type="project" value="UniProtKB-UniRule"/>
</dbReference>
<dbReference type="GO" id="GO:0006515">
    <property type="term" value="P:protein quality control for misfolded or incompletely synthesized proteins"/>
    <property type="evidence" value="ECO:0007669"/>
    <property type="project" value="TreeGrafter"/>
</dbReference>
<dbReference type="CDD" id="cd07017">
    <property type="entry name" value="S14_ClpP_2"/>
    <property type="match status" value="1"/>
</dbReference>
<dbReference type="FunFam" id="3.90.226.10:FF:000001">
    <property type="entry name" value="ATP-dependent Clp protease proteolytic subunit"/>
    <property type="match status" value="1"/>
</dbReference>
<dbReference type="Gene3D" id="3.90.226.10">
    <property type="entry name" value="2-enoyl-CoA Hydratase, Chain A, domain 1"/>
    <property type="match status" value="1"/>
</dbReference>
<dbReference type="HAMAP" id="MF_00444">
    <property type="entry name" value="ClpP"/>
    <property type="match status" value="1"/>
</dbReference>
<dbReference type="InterPro" id="IPR001907">
    <property type="entry name" value="ClpP"/>
</dbReference>
<dbReference type="InterPro" id="IPR029045">
    <property type="entry name" value="ClpP/crotonase-like_dom_sf"/>
</dbReference>
<dbReference type="InterPro" id="IPR023562">
    <property type="entry name" value="ClpP/TepA"/>
</dbReference>
<dbReference type="InterPro" id="IPR033135">
    <property type="entry name" value="ClpP_His_AS"/>
</dbReference>
<dbReference type="InterPro" id="IPR018215">
    <property type="entry name" value="ClpP_Ser_AS"/>
</dbReference>
<dbReference type="NCBIfam" id="TIGR00493">
    <property type="entry name" value="clpP"/>
    <property type="match status" value="1"/>
</dbReference>
<dbReference type="NCBIfam" id="NF001368">
    <property type="entry name" value="PRK00277.1"/>
    <property type="match status" value="1"/>
</dbReference>
<dbReference type="NCBIfam" id="NF009205">
    <property type="entry name" value="PRK12553.1"/>
    <property type="match status" value="1"/>
</dbReference>
<dbReference type="PANTHER" id="PTHR10381">
    <property type="entry name" value="ATP-DEPENDENT CLP PROTEASE PROTEOLYTIC SUBUNIT"/>
    <property type="match status" value="1"/>
</dbReference>
<dbReference type="PANTHER" id="PTHR10381:SF70">
    <property type="entry name" value="ATP-DEPENDENT CLP PROTEASE PROTEOLYTIC SUBUNIT"/>
    <property type="match status" value="1"/>
</dbReference>
<dbReference type="Pfam" id="PF00574">
    <property type="entry name" value="CLP_protease"/>
    <property type="match status" value="1"/>
</dbReference>
<dbReference type="PRINTS" id="PR00127">
    <property type="entry name" value="CLPPROTEASEP"/>
</dbReference>
<dbReference type="SUPFAM" id="SSF52096">
    <property type="entry name" value="ClpP/crotonase"/>
    <property type="match status" value="1"/>
</dbReference>
<dbReference type="PROSITE" id="PS00382">
    <property type="entry name" value="CLP_PROTEASE_HIS"/>
    <property type="match status" value="1"/>
</dbReference>
<dbReference type="PROSITE" id="PS00381">
    <property type="entry name" value="CLP_PROTEASE_SER"/>
    <property type="match status" value="1"/>
</dbReference>
<accession>Q1BH85</accession>
<comment type="function">
    <text evidence="1">Cleaves peptides in various proteins in a process that requires ATP hydrolysis. Has a chymotrypsin-like activity. Plays a major role in the degradation of misfolded proteins.</text>
</comment>
<comment type="catalytic activity">
    <reaction evidence="1">
        <text>Hydrolysis of proteins to small peptides in the presence of ATP and magnesium. alpha-casein is the usual test substrate. In the absence of ATP, only oligopeptides shorter than five residues are hydrolyzed (such as succinyl-Leu-Tyr-|-NHMec, and Leu-Tyr-Leu-|-Tyr-Trp, in which cleavage of the -Tyr-|-Leu- and -Tyr-|-Trp bonds also occurs).</text>
        <dbReference type="EC" id="3.4.21.92"/>
    </reaction>
</comment>
<comment type="subunit">
    <text evidence="1">Fourteen ClpP subunits assemble into 2 heptameric rings which stack back to back to give a disk-like structure with a central cavity, resembling the structure of eukaryotic proteasomes.</text>
</comment>
<comment type="subcellular location">
    <subcellularLocation>
        <location evidence="1">Cytoplasm</location>
    </subcellularLocation>
</comment>
<comment type="similarity">
    <text evidence="1">Belongs to the peptidase S14 family.</text>
</comment>
<name>CLPP_BURO1</name>
<sequence>MITRAELLDMLASNAPQGFEAQALGLVPIVVETSGRGERSYDIYSRLLKERLVFMVGEVNDQTANLVVAQLLFLESENPDKDISLYINSPGGSVSAGMAIYDTMQFIKPDVSTLCMGLAASMGAFLLASGAKGKRFALPNSRVMIHQPLGGARGQASDIEIQAREILYLKERLNNLLAQHTGQDVERIARDTDRDNFMSSEDAKAYGLIDQVLLKRP</sequence>
<proteinExistence type="inferred from homology"/>
<organism>
    <name type="scientific">Burkholderia orbicola (strain AU 1054)</name>
    <dbReference type="NCBI Taxonomy" id="331271"/>
    <lineage>
        <taxon>Bacteria</taxon>
        <taxon>Pseudomonadati</taxon>
        <taxon>Pseudomonadota</taxon>
        <taxon>Betaproteobacteria</taxon>
        <taxon>Burkholderiales</taxon>
        <taxon>Burkholderiaceae</taxon>
        <taxon>Burkholderia</taxon>
        <taxon>Burkholderia cepacia complex</taxon>
        <taxon>Burkholderia orbicola</taxon>
    </lineage>
</organism>
<reference key="1">
    <citation type="submission" date="2006-05" db="EMBL/GenBank/DDBJ databases">
        <title>Complete sequence of chromosome 3 of Burkholderia cenocepacia AU 1054.</title>
        <authorList>
            <consortium name="US DOE Joint Genome Institute"/>
            <person name="Copeland A."/>
            <person name="Lucas S."/>
            <person name="Lapidus A."/>
            <person name="Barry K."/>
            <person name="Detter J.C."/>
            <person name="Glavina del Rio T."/>
            <person name="Hammon N."/>
            <person name="Israni S."/>
            <person name="Dalin E."/>
            <person name="Tice H."/>
            <person name="Pitluck S."/>
            <person name="Chain P."/>
            <person name="Malfatti S."/>
            <person name="Shin M."/>
            <person name="Vergez L."/>
            <person name="Schmutz J."/>
            <person name="Larimer F."/>
            <person name="Land M."/>
            <person name="Hauser L."/>
            <person name="Kyrpides N."/>
            <person name="Lykidis A."/>
            <person name="LiPuma J.J."/>
            <person name="Konstantinidis K."/>
            <person name="Tiedje J.M."/>
            <person name="Richardson P."/>
        </authorList>
    </citation>
    <scope>NUCLEOTIDE SEQUENCE [LARGE SCALE GENOMIC DNA]</scope>
    <source>
        <strain>AU 1054</strain>
    </source>
</reference>
<evidence type="ECO:0000255" key="1">
    <source>
        <dbReference type="HAMAP-Rule" id="MF_00444"/>
    </source>
</evidence>
<protein>
    <recommendedName>
        <fullName evidence="1">ATP-dependent Clp protease proteolytic subunit</fullName>
        <ecNumber evidence="1">3.4.21.92</ecNumber>
    </recommendedName>
    <alternativeName>
        <fullName evidence="1">Endopeptidase Clp</fullName>
    </alternativeName>
</protein>